<gene>
    <name evidence="1" type="primary">pyrG</name>
    <name type="ordered locus">Hhal_1439</name>
</gene>
<comment type="function">
    <text evidence="1">Catalyzes the ATP-dependent amination of UTP to CTP with either L-glutamine or ammonia as the source of nitrogen. Regulates intracellular CTP levels through interactions with the four ribonucleotide triphosphates.</text>
</comment>
<comment type="catalytic activity">
    <reaction evidence="1">
        <text>UTP + L-glutamine + ATP + H2O = CTP + L-glutamate + ADP + phosphate + 2 H(+)</text>
        <dbReference type="Rhea" id="RHEA:26426"/>
        <dbReference type="ChEBI" id="CHEBI:15377"/>
        <dbReference type="ChEBI" id="CHEBI:15378"/>
        <dbReference type="ChEBI" id="CHEBI:29985"/>
        <dbReference type="ChEBI" id="CHEBI:30616"/>
        <dbReference type="ChEBI" id="CHEBI:37563"/>
        <dbReference type="ChEBI" id="CHEBI:43474"/>
        <dbReference type="ChEBI" id="CHEBI:46398"/>
        <dbReference type="ChEBI" id="CHEBI:58359"/>
        <dbReference type="ChEBI" id="CHEBI:456216"/>
        <dbReference type="EC" id="6.3.4.2"/>
    </reaction>
</comment>
<comment type="catalytic activity">
    <reaction evidence="1">
        <text>L-glutamine + H2O = L-glutamate + NH4(+)</text>
        <dbReference type="Rhea" id="RHEA:15889"/>
        <dbReference type="ChEBI" id="CHEBI:15377"/>
        <dbReference type="ChEBI" id="CHEBI:28938"/>
        <dbReference type="ChEBI" id="CHEBI:29985"/>
        <dbReference type="ChEBI" id="CHEBI:58359"/>
    </reaction>
</comment>
<comment type="catalytic activity">
    <reaction evidence="1">
        <text>UTP + NH4(+) + ATP = CTP + ADP + phosphate + 2 H(+)</text>
        <dbReference type="Rhea" id="RHEA:16597"/>
        <dbReference type="ChEBI" id="CHEBI:15378"/>
        <dbReference type="ChEBI" id="CHEBI:28938"/>
        <dbReference type="ChEBI" id="CHEBI:30616"/>
        <dbReference type="ChEBI" id="CHEBI:37563"/>
        <dbReference type="ChEBI" id="CHEBI:43474"/>
        <dbReference type="ChEBI" id="CHEBI:46398"/>
        <dbReference type="ChEBI" id="CHEBI:456216"/>
    </reaction>
</comment>
<comment type="activity regulation">
    <text evidence="1">Allosterically activated by GTP, when glutamine is the substrate; GTP has no effect on the reaction when ammonia is the substrate. The allosteric effector GTP functions by stabilizing the protein conformation that binds the tetrahedral intermediate(s) formed during glutamine hydrolysis. Inhibited by the product CTP, via allosteric rather than competitive inhibition.</text>
</comment>
<comment type="pathway">
    <text evidence="1">Pyrimidine metabolism; CTP biosynthesis via de novo pathway; CTP from UDP: step 2/2.</text>
</comment>
<comment type="subunit">
    <text evidence="1">Homotetramer.</text>
</comment>
<comment type="miscellaneous">
    <text evidence="1">CTPSs have evolved a hybrid strategy for distinguishing between UTP and CTP. The overlapping regions of the product feedback inhibitory and substrate sites recognize a common feature in both compounds, the triphosphate moiety. To differentiate isosteric substrate and product pyrimidine rings, an additional pocket far from the expected kinase/ligase catalytic site, specifically recognizes the cytosine and ribose portions of the product inhibitor.</text>
</comment>
<comment type="similarity">
    <text evidence="1">Belongs to the CTP synthase family.</text>
</comment>
<feature type="chain" id="PRO_1000139469" description="CTP synthase">
    <location>
        <begin position="1"/>
        <end position="551"/>
    </location>
</feature>
<feature type="domain" description="Glutamine amidotransferase type-1" evidence="1">
    <location>
        <begin position="290"/>
        <end position="541"/>
    </location>
</feature>
<feature type="region of interest" description="Amidoligase domain" evidence="1">
    <location>
        <begin position="1"/>
        <end position="265"/>
    </location>
</feature>
<feature type="active site" description="Nucleophile; for glutamine hydrolysis" evidence="1">
    <location>
        <position position="378"/>
    </location>
</feature>
<feature type="active site" evidence="1">
    <location>
        <position position="514"/>
    </location>
</feature>
<feature type="active site" evidence="1">
    <location>
        <position position="516"/>
    </location>
</feature>
<feature type="binding site" evidence="1">
    <location>
        <position position="13"/>
    </location>
    <ligand>
        <name>CTP</name>
        <dbReference type="ChEBI" id="CHEBI:37563"/>
        <note>allosteric inhibitor</note>
    </ligand>
</feature>
<feature type="binding site" evidence="1">
    <location>
        <position position="13"/>
    </location>
    <ligand>
        <name>UTP</name>
        <dbReference type="ChEBI" id="CHEBI:46398"/>
    </ligand>
</feature>
<feature type="binding site" evidence="1">
    <location>
        <begin position="14"/>
        <end position="19"/>
    </location>
    <ligand>
        <name>ATP</name>
        <dbReference type="ChEBI" id="CHEBI:30616"/>
    </ligand>
</feature>
<feature type="binding site" evidence="1">
    <location>
        <position position="71"/>
    </location>
    <ligand>
        <name>ATP</name>
        <dbReference type="ChEBI" id="CHEBI:30616"/>
    </ligand>
</feature>
<feature type="binding site" evidence="1">
    <location>
        <position position="71"/>
    </location>
    <ligand>
        <name>Mg(2+)</name>
        <dbReference type="ChEBI" id="CHEBI:18420"/>
    </ligand>
</feature>
<feature type="binding site" evidence="1">
    <location>
        <position position="139"/>
    </location>
    <ligand>
        <name>Mg(2+)</name>
        <dbReference type="ChEBI" id="CHEBI:18420"/>
    </ligand>
</feature>
<feature type="binding site" evidence="1">
    <location>
        <begin position="146"/>
        <end position="148"/>
    </location>
    <ligand>
        <name>CTP</name>
        <dbReference type="ChEBI" id="CHEBI:37563"/>
        <note>allosteric inhibitor</note>
    </ligand>
</feature>
<feature type="binding site" evidence="1">
    <location>
        <begin position="186"/>
        <end position="191"/>
    </location>
    <ligand>
        <name>CTP</name>
        <dbReference type="ChEBI" id="CHEBI:37563"/>
        <note>allosteric inhibitor</note>
    </ligand>
</feature>
<feature type="binding site" evidence="1">
    <location>
        <begin position="186"/>
        <end position="191"/>
    </location>
    <ligand>
        <name>UTP</name>
        <dbReference type="ChEBI" id="CHEBI:46398"/>
    </ligand>
</feature>
<feature type="binding site" evidence="1">
    <location>
        <position position="222"/>
    </location>
    <ligand>
        <name>CTP</name>
        <dbReference type="ChEBI" id="CHEBI:37563"/>
        <note>allosteric inhibitor</note>
    </ligand>
</feature>
<feature type="binding site" evidence="1">
    <location>
        <position position="222"/>
    </location>
    <ligand>
        <name>UTP</name>
        <dbReference type="ChEBI" id="CHEBI:46398"/>
    </ligand>
</feature>
<feature type="binding site" evidence="1">
    <location>
        <position position="351"/>
    </location>
    <ligand>
        <name>L-glutamine</name>
        <dbReference type="ChEBI" id="CHEBI:58359"/>
    </ligand>
</feature>
<feature type="binding site" evidence="1">
    <location>
        <begin position="379"/>
        <end position="382"/>
    </location>
    <ligand>
        <name>L-glutamine</name>
        <dbReference type="ChEBI" id="CHEBI:58359"/>
    </ligand>
</feature>
<feature type="binding site" evidence="1">
    <location>
        <position position="402"/>
    </location>
    <ligand>
        <name>L-glutamine</name>
        <dbReference type="ChEBI" id="CHEBI:58359"/>
    </ligand>
</feature>
<feature type="binding site" evidence="1">
    <location>
        <position position="469"/>
    </location>
    <ligand>
        <name>L-glutamine</name>
        <dbReference type="ChEBI" id="CHEBI:58359"/>
    </ligand>
</feature>
<sequence length="551" mass="61464">MTRYLFITGGVVSSLGKGISAASLGTILQARGLSVTLIKLDPYINVDPGTMSPFQHGEVYVTDDGAETDLDLGHYERFVRAPVSRRNNFTTGRIYESVIRKERRGDYLGGTVQVIPHVTDEIKRCIQEGADDVDVALVEIGGTVGDIESLPFLEAIRQMGTELGRERCMFMHLTLVPFIGTAGEMKTKPTQHSVKELRSIGIQPDILVCRAAHPIPEEERRKIALFTNVEPRAVIAALDVPNIYQIPEELHQQGLDHIVAEKWGLELPPANLADWHRVVEIMSNPEGEVTVAMVGKYVDLTDAYMSLNEALRHAGIQTRQRVNIRYVDSESLEREGCSALEGADAILVPGGFGQRGIEGKIEAVRFARESRIPYLGICLGMQLAVIEYARHQAGLENAHSTEFVRHPHHPVIGLITEWMTDEGEVEQRDEADDLGGTMRLGGQPCRLAAGTLINQVYGKDRIVERHRHRYEFNNHYRERLAEAGLSFSGWSQDGRLVEVVELPEHPWFIGCQFHPEFTSTPRDGHPLFASFLRAAIAHRDGTAQAFNHEQH</sequence>
<name>PYRG_HALHL</name>
<evidence type="ECO:0000255" key="1">
    <source>
        <dbReference type="HAMAP-Rule" id="MF_01227"/>
    </source>
</evidence>
<keyword id="KW-0067">ATP-binding</keyword>
<keyword id="KW-0315">Glutamine amidotransferase</keyword>
<keyword id="KW-0436">Ligase</keyword>
<keyword id="KW-0460">Magnesium</keyword>
<keyword id="KW-0479">Metal-binding</keyword>
<keyword id="KW-0547">Nucleotide-binding</keyword>
<keyword id="KW-0665">Pyrimidine biosynthesis</keyword>
<keyword id="KW-1185">Reference proteome</keyword>
<proteinExistence type="inferred from homology"/>
<protein>
    <recommendedName>
        <fullName evidence="1">CTP synthase</fullName>
        <ecNumber evidence="1">6.3.4.2</ecNumber>
    </recommendedName>
    <alternativeName>
        <fullName evidence="1">Cytidine 5'-triphosphate synthase</fullName>
    </alternativeName>
    <alternativeName>
        <fullName evidence="1">Cytidine triphosphate synthetase</fullName>
        <shortName evidence="1">CTP synthetase</shortName>
        <shortName evidence="1">CTPS</shortName>
    </alternativeName>
    <alternativeName>
        <fullName evidence="1">UTP--ammonia ligase</fullName>
    </alternativeName>
</protein>
<accession>A1WWZ4</accession>
<organism>
    <name type="scientific">Halorhodospira halophila (strain DSM 244 / SL1)</name>
    <name type="common">Ectothiorhodospira halophila (strain DSM 244 / SL1)</name>
    <dbReference type="NCBI Taxonomy" id="349124"/>
    <lineage>
        <taxon>Bacteria</taxon>
        <taxon>Pseudomonadati</taxon>
        <taxon>Pseudomonadota</taxon>
        <taxon>Gammaproteobacteria</taxon>
        <taxon>Chromatiales</taxon>
        <taxon>Ectothiorhodospiraceae</taxon>
        <taxon>Halorhodospira</taxon>
    </lineage>
</organism>
<dbReference type="EC" id="6.3.4.2" evidence="1"/>
<dbReference type="EMBL" id="CP000544">
    <property type="protein sequence ID" value="ABM62206.1"/>
    <property type="molecule type" value="Genomic_DNA"/>
</dbReference>
<dbReference type="RefSeq" id="WP_011814228.1">
    <property type="nucleotide sequence ID" value="NC_008789.1"/>
</dbReference>
<dbReference type="SMR" id="A1WWZ4"/>
<dbReference type="STRING" id="349124.Hhal_1439"/>
<dbReference type="KEGG" id="hha:Hhal_1439"/>
<dbReference type="eggNOG" id="COG0504">
    <property type="taxonomic scope" value="Bacteria"/>
</dbReference>
<dbReference type="HOGENOM" id="CLU_011675_5_0_6"/>
<dbReference type="OrthoDB" id="9801107at2"/>
<dbReference type="UniPathway" id="UPA00159">
    <property type="reaction ID" value="UER00277"/>
</dbReference>
<dbReference type="Proteomes" id="UP000000647">
    <property type="component" value="Chromosome"/>
</dbReference>
<dbReference type="GO" id="GO:0005829">
    <property type="term" value="C:cytosol"/>
    <property type="evidence" value="ECO:0007669"/>
    <property type="project" value="TreeGrafter"/>
</dbReference>
<dbReference type="GO" id="GO:0005524">
    <property type="term" value="F:ATP binding"/>
    <property type="evidence" value="ECO:0007669"/>
    <property type="project" value="UniProtKB-KW"/>
</dbReference>
<dbReference type="GO" id="GO:0003883">
    <property type="term" value="F:CTP synthase activity"/>
    <property type="evidence" value="ECO:0007669"/>
    <property type="project" value="UniProtKB-UniRule"/>
</dbReference>
<dbReference type="GO" id="GO:0004359">
    <property type="term" value="F:glutaminase activity"/>
    <property type="evidence" value="ECO:0007669"/>
    <property type="project" value="RHEA"/>
</dbReference>
<dbReference type="GO" id="GO:0042802">
    <property type="term" value="F:identical protein binding"/>
    <property type="evidence" value="ECO:0007669"/>
    <property type="project" value="TreeGrafter"/>
</dbReference>
<dbReference type="GO" id="GO:0046872">
    <property type="term" value="F:metal ion binding"/>
    <property type="evidence" value="ECO:0007669"/>
    <property type="project" value="UniProtKB-KW"/>
</dbReference>
<dbReference type="GO" id="GO:0044210">
    <property type="term" value="P:'de novo' CTP biosynthetic process"/>
    <property type="evidence" value="ECO:0007669"/>
    <property type="project" value="UniProtKB-UniRule"/>
</dbReference>
<dbReference type="GO" id="GO:0019856">
    <property type="term" value="P:pyrimidine nucleobase biosynthetic process"/>
    <property type="evidence" value="ECO:0007669"/>
    <property type="project" value="TreeGrafter"/>
</dbReference>
<dbReference type="CDD" id="cd03113">
    <property type="entry name" value="CTPS_N"/>
    <property type="match status" value="1"/>
</dbReference>
<dbReference type="CDD" id="cd01746">
    <property type="entry name" value="GATase1_CTP_Synthase"/>
    <property type="match status" value="1"/>
</dbReference>
<dbReference type="FunFam" id="3.40.50.300:FF:000009">
    <property type="entry name" value="CTP synthase"/>
    <property type="match status" value="1"/>
</dbReference>
<dbReference type="FunFam" id="3.40.50.880:FF:000002">
    <property type="entry name" value="CTP synthase"/>
    <property type="match status" value="1"/>
</dbReference>
<dbReference type="Gene3D" id="3.40.50.880">
    <property type="match status" value="1"/>
</dbReference>
<dbReference type="Gene3D" id="3.40.50.300">
    <property type="entry name" value="P-loop containing nucleotide triphosphate hydrolases"/>
    <property type="match status" value="1"/>
</dbReference>
<dbReference type="HAMAP" id="MF_01227">
    <property type="entry name" value="PyrG"/>
    <property type="match status" value="1"/>
</dbReference>
<dbReference type="InterPro" id="IPR029062">
    <property type="entry name" value="Class_I_gatase-like"/>
</dbReference>
<dbReference type="InterPro" id="IPR004468">
    <property type="entry name" value="CTP_synthase"/>
</dbReference>
<dbReference type="InterPro" id="IPR017456">
    <property type="entry name" value="CTP_synthase_N"/>
</dbReference>
<dbReference type="InterPro" id="IPR017926">
    <property type="entry name" value="GATASE"/>
</dbReference>
<dbReference type="InterPro" id="IPR033828">
    <property type="entry name" value="GATase1_CTP_Synthase"/>
</dbReference>
<dbReference type="InterPro" id="IPR027417">
    <property type="entry name" value="P-loop_NTPase"/>
</dbReference>
<dbReference type="NCBIfam" id="NF003792">
    <property type="entry name" value="PRK05380.1"/>
    <property type="match status" value="1"/>
</dbReference>
<dbReference type="NCBIfam" id="TIGR00337">
    <property type="entry name" value="PyrG"/>
    <property type="match status" value="1"/>
</dbReference>
<dbReference type="PANTHER" id="PTHR11550">
    <property type="entry name" value="CTP SYNTHASE"/>
    <property type="match status" value="1"/>
</dbReference>
<dbReference type="PANTHER" id="PTHR11550:SF0">
    <property type="entry name" value="CTP SYNTHASE-RELATED"/>
    <property type="match status" value="1"/>
</dbReference>
<dbReference type="Pfam" id="PF06418">
    <property type="entry name" value="CTP_synth_N"/>
    <property type="match status" value="1"/>
</dbReference>
<dbReference type="Pfam" id="PF00117">
    <property type="entry name" value="GATase"/>
    <property type="match status" value="1"/>
</dbReference>
<dbReference type="SUPFAM" id="SSF52317">
    <property type="entry name" value="Class I glutamine amidotransferase-like"/>
    <property type="match status" value="1"/>
</dbReference>
<dbReference type="SUPFAM" id="SSF52540">
    <property type="entry name" value="P-loop containing nucleoside triphosphate hydrolases"/>
    <property type="match status" value="1"/>
</dbReference>
<dbReference type="PROSITE" id="PS51273">
    <property type="entry name" value="GATASE_TYPE_1"/>
    <property type="match status" value="1"/>
</dbReference>
<reference key="1">
    <citation type="submission" date="2006-12" db="EMBL/GenBank/DDBJ databases">
        <title>Complete sequence of Halorhodospira halophila SL1.</title>
        <authorList>
            <consortium name="US DOE Joint Genome Institute"/>
            <person name="Copeland A."/>
            <person name="Lucas S."/>
            <person name="Lapidus A."/>
            <person name="Barry K."/>
            <person name="Detter J.C."/>
            <person name="Glavina del Rio T."/>
            <person name="Hammon N."/>
            <person name="Israni S."/>
            <person name="Dalin E."/>
            <person name="Tice H."/>
            <person name="Pitluck S."/>
            <person name="Saunders E."/>
            <person name="Brettin T."/>
            <person name="Bruce D."/>
            <person name="Han C."/>
            <person name="Tapia R."/>
            <person name="Schmutz J."/>
            <person name="Larimer F."/>
            <person name="Land M."/>
            <person name="Hauser L."/>
            <person name="Kyrpides N."/>
            <person name="Mikhailova N."/>
            <person name="Hoff W."/>
            <person name="Richardson P."/>
        </authorList>
    </citation>
    <scope>NUCLEOTIDE SEQUENCE [LARGE SCALE GENOMIC DNA]</scope>
    <source>
        <strain>DSM 244 / SL1</strain>
    </source>
</reference>